<evidence type="ECO:0000256" key="1">
    <source>
        <dbReference type="SAM" id="MobiDB-lite"/>
    </source>
</evidence>
<evidence type="ECO:0000303" key="2">
    <source>
    </source>
</evidence>
<evidence type="ECO:0000305" key="3"/>
<dbReference type="EMBL" id="AL023094">
    <property type="status" value="NOT_ANNOTATED_CDS"/>
    <property type="molecule type" value="Genomic_DNA"/>
</dbReference>
<dbReference type="EMBL" id="AL161585">
    <property type="status" value="NOT_ANNOTATED_CDS"/>
    <property type="molecule type" value="Genomic_DNA"/>
</dbReference>
<dbReference type="EMBL" id="CP002687">
    <property type="protein sequence ID" value="AEE86392.1"/>
    <property type="molecule type" value="Genomic_DNA"/>
</dbReference>
<dbReference type="EMBL" id="AK117527">
    <property type="protein sequence ID" value="BAC42189.1"/>
    <property type="status" value="ALT_FRAME"/>
    <property type="molecule type" value="mRNA"/>
</dbReference>
<dbReference type="EMBL" id="AK176080">
    <property type="protein sequence ID" value="BAD43843.1"/>
    <property type="molecule type" value="mRNA"/>
</dbReference>
<dbReference type="EMBL" id="BT025584">
    <property type="protein sequence ID" value="ABF59002.1"/>
    <property type="molecule type" value="mRNA"/>
</dbReference>
<dbReference type="EMBL" id="AY088627">
    <property type="protein sequence ID" value="AAM66949.1"/>
    <property type="molecule type" value="mRNA"/>
</dbReference>
<dbReference type="RefSeq" id="NP_567968.1">
    <property type="nucleotide sequence ID" value="NM_119621.3"/>
</dbReference>
<dbReference type="SMR" id="Q8GYL5"/>
<dbReference type="BioGRID" id="14889">
    <property type="interactions" value="11"/>
</dbReference>
<dbReference type="FunCoup" id="Q8GYL5">
    <property type="interactions" value="3321"/>
</dbReference>
<dbReference type="STRING" id="3702.Q8GYL5"/>
<dbReference type="PaxDb" id="3702-AT4G34555.1"/>
<dbReference type="ProteomicsDB" id="237013"/>
<dbReference type="EnsemblPlants" id="AT4G34555.1">
    <property type="protein sequence ID" value="AT4G34555.1"/>
    <property type="gene ID" value="AT4G34555"/>
</dbReference>
<dbReference type="GeneID" id="829607"/>
<dbReference type="Gramene" id="AT4G34555.1">
    <property type="protein sequence ID" value="AT4G34555.1"/>
    <property type="gene ID" value="AT4G34555"/>
</dbReference>
<dbReference type="KEGG" id="ath:AT4G34555"/>
<dbReference type="Araport" id="AT4G34555"/>
<dbReference type="TAIR" id="AT4G34555"/>
<dbReference type="eggNOG" id="KOG1767">
    <property type="taxonomic scope" value="Eukaryota"/>
</dbReference>
<dbReference type="HOGENOM" id="CLU_129470_0_1_1"/>
<dbReference type="InParanoid" id="Q8GYL5"/>
<dbReference type="OMA" id="RIVHHSG"/>
<dbReference type="OrthoDB" id="3171at2759"/>
<dbReference type="PhylomeDB" id="Q8GYL5"/>
<dbReference type="CD-CODE" id="4299E36E">
    <property type="entry name" value="Nucleolus"/>
</dbReference>
<dbReference type="PRO" id="PR:Q8GYL5"/>
<dbReference type="Proteomes" id="UP000006548">
    <property type="component" value="Chromosome 4"/>
</dbReference>
<dbReference type="ExpressionAtlas" id="Q8GYL5">
    <property type="expression patterns" value="baseline and differential"/>
</dbReference>
<dbReference type="GO" id="GO:0022627">
    <property type="term" value="C:cytosolic small ribosomal subunit"/>
    <property type="evidence" value="ECO:0007005"/>
    <property type="project" value="TAIR"/>
</dbReference>
<dbReference type="GO" id="GO:0005886">
    <property type="term" value="C:plasma membrane"/>
    <property type="evidence" value="ECO:0007005"/>
    <property type="project" value="TAIR"/>
</dbReference>
<dbReference type="GO" id="GO:0003735">
    <property type="term" value="F:structural constituent of ribosome"/>
    <property type="evidence" value="ECO:0000314"/>
    <property type="project" value="CAFA"/>
</dbReference>
<dbReference type="FunFam" id="3.30.63.20:FF:000001">
    <property type="entry name" value="40S ribosomal protein S25"/>
    <property type="match status" value="1"/>
</dbReference>
<dbReference type="Gene3D" id="3.30.63.20">
    <property type="match status" value="1"/>
</dbReference>
<dbReference type="InterPro" id="IPR004977">
    <property type="entry name" value="Ribosomal_eS25"/>
</dbReference>
<dbReference type="PANTHER" id="PTHR12850">
    <property type="entry name" value="40S RIBOSOMAL PROTEIN S25"/>
    <property type="match status" value="1"/>
</dbReference>
<dbReference type="Pfam" id="PF03297">
    <property type="entry name" value="Ribosomal_S25"/>
    <property type="match status" value="1"/>
</dbReference>
<sequence length="108" mass="12018">MAPKKDKVPPPSSKPAKSGGGKQKKKKWSKGKQKEKVNNMVLFDQATYDKLLSEAPKFKLITPSILSDRLRINGSLARRAIRELMAKGTIRMVSAHSSQQIYTRATHG</sequence>
<organism>
    <name type="scientific">Arabidopsis thaliana</name>
    <name type="common">Mouse-ear cress</name>
    <dbReference type="NCBI Taxonomy" id="3702"/>
    <lineage>
        <taxon>Eukaryota</taxon>
        <taxon>Viridiplantae</taxon>
        <taxon>Streptophyta</taxon>
        <taxon>Embryophyta</taxon>
        <taxon>Tracheophyta</taxon>
        <taxon>Spermatophyta</taxon>
        <taxon>Magnoliopsida</taxon>
        <taxon>eudicotyledons</taxon>
        <taxon>Gunneridae</taxon>
        <taxon>Pentapetalae</taxon>
        <taxon>rosids</taxon>
        <taxon>malvids</taxon>
        <taxon>Brassicales</taxon>
        <taxon>Brassicaceae</taxon>
        <taxon>Camelineae</taxon>
        <taxon>Arabidopsis</taxon>
    </lineage>
</organism>
<feature type="chain" id="PRO_0000250535" description="Small ribosomal subunit protein eS25x">
    <location>
        <begin position="1"/>
        <end position="108"/>
    </location>
</feature>
<feature type="region of interest" description="Disordered" evidence="1">
    <location>
        <begin position="1"/>
        <end position="36"/>
    </location>
</feature>
<feature type="compositionally biased region" description="Basic residues" evidence="1">
    <location>
        <begin position="22"/>
        <end position="31"/>
    </location>
</feature>
<name>RS253_ARATH</name>
<comment type="similarity">
    <text evidence="3">Belongs to the eukaryotic ribosomal protein eS25 family.</text>
</comment>
<comment type="sequence caution" evidence="3">
    <conflict type="frameshift">
        <sequence resource="EMBL-CDS" id="BAC42189"/>
    </conflict>
</comment>
<proteinExistence type="inferred from homology"/>
<reference key="1">
    <citation type="journal article" date="1999" name="Nature">
        <title>Sequence and analysis of chromosome 4 of the plant Arabidopsis thaliana.</title>
        <authorList>
            <person name="Mayer K.F.X."/>
            <person name="Schueller C."/>
            <person name="Wambutt R."/>
            <person name="Murphy G."/>
            <person name="Volckaert G."/>
            <person name="Pohl T."/>
            <person name="Duesterhoeft A."/>
            <person name="Stiekema W."/>
            <person name="Entian K.-D."/>
            <person name="Terryn N."/>
            <person name="Harris B."/>
            <person name="Ansorge W."/>
            <person name="Brandt P."/>
            <person name="Grivell L.A."/>
            <person name="Rieger M."/>
            <person name="Weichselgartner M."/>
            <person name="de Simone V."/>
            <person name="Obermaier B."/>
            <person name="Mache R."/>
            <person name="Mueller M."/>
            <person name="Kreis M."/>
            <person name="Delseny M."/>
            <person name="Puigdomenech P."/>
            <person name="Watson M."/>
            <person name="Schmidtheini T."/>
            <person name="Reichert B."/>
            <person name="Portetelle D."/>
            <person name="Perez-Alonso M."/>
            <person name="Boutry M."/>
            <person name="Bancroft I."/>
            <person name="Vos P."/>
            <person name="Hoheisel J."/>
            <person name="Zimmermann W."/>
            <person name="Wedler H."/>
            <person name="Ridley P."/>
            <person name="Langham S.-A."/>
            <person name="McCullagh B."/>
            <person name="Bilham L."/>
            <person name="Robben J."/>
            <person name="van der Schueren J."/>
            <person name="Grymonprez B."/>
            <person name="Chuang Y.-J."/>
            <person name="Vandenbussche F."/>
            <person name="Braeken M."/>
            <person name="Weltjens I."/>
            <person name="Voet M."/>
            <person name="Bastiaens I."/>
            <person name="Aert R."/>
            <person name="Defoor E."/>
            <person name="Weitzenegger T."/>
            <person name="Bothe G."/>
            <person name="Ramsperger U."/>
            <person name="Hilbert H."/>
            <person name="Braun M."/>
            <person name="Holzer E."/>
            <person name="Brandt A."/>
            <person name="Peters S."/>
            <person name="van Staveren M."/>
            <person name="Dirkse W."/>
            <person name="Mooijman P."/>
            <person name="Klein Lankhorst R."/>
            <person name="Rose M."/>
            <person name="Hauf J."/>
            <person name="Koetter P."/>
            <person name="Berneiser S."/>
            <person name="Hempel S."/>
            <person name="Feldpausch M."/>
            <person name="Lamberth S."/>
            <person name="Van den Daele H."/>
            <person name="De Keyser A."/>
            <person name="Buysshaert C."/>
            <person name="Gielen J."/>
            <person name="Villarroel R."/>
            <person name="De Clercq R."/>
            <person name="van Montagu M."/>
            <person name="Rogers J."/>
            <person name="Cronin A."/>
            <person name="Quail M.A."/>
            <person name="Bray-Allen S."/>
            <person name="Clark L."/>
            <person name="Doggett J."/>
            <person name="Hall S."/>
            <person name="Kay M."/>
            <person name="Lennard N."/>
            <person name="McLay K."/>
            <person name="Mayes R."/>
            <person name="Pettett A."/>
            <person name="Rajandream M.A."/>
            <person name="Lyne M."/>
            <person name="Benes V."/>
            <person name="Rechmann S."/>
            <person name="Borkova D."/>
            <person name="Bloecker H."/>
            <person name="Scharfe M."/>
            <person name="Grimm M."/>
            <person name="Loehnert T.-H."/>
            <person name="Dose S."/>
            <person name="de Haan M."/>
            <person name="Maarse A.C."/>
            <person name="Schaefer M."/>
            <person name="Mueller-Auer S."/>
            <person name="Gabel C."/>
            <person name="Fuchs M."/>
            <person name="Fartmann B."/>
            <person name="Granderath K."/>
            <person name="Dauner D."/>
            <person name="Herzl A."/>
            <person name="Neumann S."/>
            <person name="Argiriou A."/>
            <person name="Vitale D."/>
            <person name="Liguori R."/>
            <person name="Piravandi E."/>
            <person name="Massenet O."/>
            <person name="Quigley F."/>
            <person name="Clabauld G."/>
            <person name="Muendlein A."/>
            <person name="Felber R."/>
            <person name="Schnabl S."/>
            <person name="Hiller R."/>
            <person name="Schmidt W."/>
            <person name="Lecharny A."/>
            <person name="Aubourg S."/>
            <person name="Chefdor F."/>
            <person name="Cooke R."/>
            <person name="Berger C."/>
            <person name="Monfort A."/>
            <person name="Casacuberta E."/>
            <person name="Gibbons T."/>
            <person name="Weber N."/>
            <person name="Vandenbol M."/>
            <person name="Bargues M."/>
            <person name="Terol J."/>
            <person name="Torres A."/>
            <person name="Perez-Perez A."/>
            <person name="Purnelle B."/>
            <person name="Bent E."/>
            <person name="Johnson S."/>
            <person name="Tacon D."/>
            <person name="Jesse T."/>
            <person name="Heijnen L."/>
            <person name="Schwarz S."/>
            <person name="Scholler P."/>
            <person name="Heber S."/>
            <person name="Francs P."/>
            <person name="Bielke C."/>
            <person name="Frishman D."/>
            <person name="Haase D."/>
            <person name="Lemcke K."/>
            <person name="Mewes H.-W."/>
            <person name="Stocker S."/>
            <person name="Zaccaria P."/>
            <person name="Bevan M."/>
            <person name="Wilson R.K."/>
            <person name="de la Bastide M."/>
            <person name="Habermann K."/>
            <person name="Parnell L."/>
            <person name="Dedhia N."/>
            <person name="Gnoj L."/>
            <person name="Schutz K."/>
            <person name="Huang E."/>
            <person name="Spiegel L."/>
            <person name="Sekhon M."/>
            <person name="Murray J."/>
            <person name="Sheet P."/>
            <person name="Cordes M."/>
            <person name="Abu-Threideh J."/>
            <person name="Stoneking T."/>
            <person name="Kalicki J."/>
            <person name="Graves T."/>
            <person name="Harmon G."/>
            <person name="Edwards J."/>
            <person name="Latreille P."/>
            <person name="Courtney L."/>
            <person name="Cloud J."/>
            <person name="Abbott A."/>
            <person name="Scott K."/>
            <person name="Johnson D."/>
            <person name="Minx P."/>
            <person name="Bentley D."/>
            <person name="Fulton B."/>
            <person name="Miller N."/>
            <person name="Greco T."/>
            <person name="Kemp K."/>
            <person name="Kramer J."/>
            <person name="Fulton L."/>
            <person name="Mardis E."/>
            <person name="Dante M."/>
            <person name="Pepin K."/>
            <person name="Hillier L.W."/>
            <person name="Nelson J."/>
            <person name="Spieth J."/>
            <person name="Ryan E."/>
            <person name="Andrews S."/>
            <person name="Geisel C."/>
            <person name="Layman D."/>
            <person name="Du H."/>
            <person name="Ali J."/>
            <person name="Berghoff A."/>
            <person name="Jones K."/>
            <person name="Drone K."/>
            <person name="Cotton M."/>
            <person name="Joshu C."/>
            <person name="Antonoiu B."/>
            <person name="Zidanic M."/>
            <person name="Strong C."/>
            <person name="Sun H."/>
            <person name="Lamar B."/>
            <person name="Yordan C."/>
            <person name="Ma P."/>
            <person name="Zhong J."/>
            <person name="Preston R."/>
            <person name="Vil D."/>
            <person name="Shekher M."/>
            <person name="Matero A."/>
            <person name="Shah R."/>
            <person name="Swaby I.K."/>
            <person name="O'Shaughnessy A."/>
            <person name="Rodriguez M."/>
            <person name="Hoffman J."/>
            <person name="Till S."/>
            <person name="Granat S."/>
            <person name="Shohdy N."/>
            <person name="Hasegawa A."/>
            <person name="Hameed A."/>
            <person name="Lodhi M."/>
            <person name="Johnson A."/>
            <person name="Chen E."/>
            <person name="Marra M.A."/>
            <person name="Martienssen R."/>
            <person name="McCombie W.R."/>
        </authorList>
    </citation>
    <scope>NUCLEOTIDE SEQUENCE [LARGE SCALE GENOMIC DNA]</scope>
    <source>
        <strain>cv. Columbia</strain>
    </source>
</reference>
<reference key="2">
    <citation type="journal article" date="2017" name="Plant J.">
        <title>Araport11: a complete reannotation of the Arabidopsis thaliana reference genome.</title>
        <authorList>
            <person name="Cheng C.Y."/>
            <person name="Krishnakumar V."/>
            <person name="Chan A.P."/>
            <person name="Thibaud-Nissen F."/>
            <person name="Schobel S."/>
            <person name="Town C.D."/>
        </authorList>
    </citation>
    <scope>GENOME REANNOTATION</scope>
    <source>
        <strain>cv. Columbia</strain>
    </source>
</reference>
<reference key="3">
    <citation type="journal article" date="2002" name="Science">
        <title>Functional annotation of a full-length Arabidopsis cDNA collection.</title>
        <authorList>
            <person name="Seki M."/>
            <person name="Narusaka M."/>
            <person name="Kamiya A."/>
            <person name="Ishida J."/>
            <person name="Satou M."/>
            <person name="Sakurai T."/>
            <person name="Nakajima M."/>
            <person name="Enju A."/>
            <person name="Akiyama K."/>
            <person name="Oono Y."/>
            <person name="Muramatsu M."/>
            <person name="Hayashizaki Y."/>
            <person name="Kawai J."/>
            <person name="Carninci P."/>
            <person name="Itoh M."/>
            <person name="Ishii Y."/>
            <person name="Arakawa T."/>
            <person name="Shibata K."/>
            <person name="Shinagawa A."/>
            <person name="Shinozaki K."/>
        </authorList>
    </citation>
    <scope>NUCLEOTIDE SEQUENCE [LARGE SCALE MRNA]</scope>
    <source>
        <strain>cv. Columbia</strain>
    </source>
</reference>
<reference key="4">
    <citation type="submission" date="2004-09" db="EMBL/GenBank/DDBJ databases">
        <title>Large-scale analysis of RIKEN Arabidopsis full-length (RAFL) cDNAs.</title>
        <authorList>
            <person name="Totoki Y."/>
            <person name="Seki M."/>
            <person name="Ishida J."/>
            <person name="Nakajima M."/>
            <person name="Enju A."/>
            <person name="Kamiya A."/>
            <person name="Narusaka M."/>
            <person name="Shin-i T."/>
            <person name="Nakagawa M."/>
            <person name="Sakamoto N."/>
            <person name="Oishi K."/>
            <person name="Kohara Y."/>
            <person name="Kobayashi M."/>
            <person name="Toyoda A."/>
            <person name="Sakaki Y."/>
            <person name="Sakurai T."/>
            <person name="Iida K."/>
            <person name="Akiyama K."/>
            <person name="Satou M."/>
            <person name="Toyoda T."/>
            <person name="Konagaya A."/>
            <person name="Carninci P."/>
            <person name="Kawai J."/>
            <person name="Hayashizaki Y."/>
            <person name="Shinozaki K."/>
        </authorList>
    </citation>
    <scope>NUCLEOTIDE SEQUENCE [LARGE SCALE MRNA]</scope>
    <source>
        <strain>cv. Columbia</strain>
    </source>
</reference>
<reference key="5">
    <citation type="submission" date="2006-05" db="EMBL/GenBank/DDBJ databases">
        <title>Arabidopsis ORF clones.</title>
        <authorList>
            <person name="Quinitio C."/>
            <person name="Chen H."/>
            <person name="Kim C.J."/>
            <person name="Shinn P."/>
            <person name="Ecker J.R."/>
        </authorList>
    </citation>
    <scope>NUCLEOTIDE SEQUENCE [LARGE SCALE MRNA]</scope>
    <source>
        <strain>cv. Columbia</strain>
    </source>
</reference>
<reference key="6">
    <citation type="submission" date="2002-03" db="EMBL/GenBank/DDBJ databases">
        <title>Full-length cDNA from Arabidopsis thaliana.</title>
        <authorList>
            <person name="Brover V.V."/>
            <person name="Troukhan M.E."/>
            <person name="Alexandrov N.A."/>
            <person name="Lu Y.-P."/>
            <person name="Flavell R.B."/>
            <person name="Feldmann K.A."/>
        </authorList>
    </citation>
    <scope>NUCLEOTIDE SEQUENCE [LARGE SCALE MRNA]</scope>
</reference>
<reference key="7">
    <citation type="journal article" date="2001" name="Plant Physiol.">
        <title>The organization of cytoplasmic ribosomal protein genes in the Arabidopsis genome.</title>
        <authorList>
            <person name="Barakat A."/>
            <person name="Szick-Miranda K."/>
            <person name="Chang I.-F."/>
            <person name="Guyot R."/>
            <person name="Blanc G."/>
            <person name="Cooke R."/>
            <person name="Delseny M."/>
            <person name="Bailey-Serres J."/>
        </authorList>
    </citation>
    <scope>GENE FAMILY ORGANIZATION</scope>
    <scope>NOMENCLATURE</scope>
</reference>
<reference key="8">
    <citation type="journal article" date="2023" name="Plant Cell">
        <title>An updated nomenclature for plant ribosomal protein genes.</title>
        <authorList>
            <person name="Scarpin M.R."/>
            <person name="Busche M."/>
            <person name="Martinez R.E."/>
            <person name="Harper L.C."/>
            <person name="Reiser L."/>
            <person name="Szakonyi D."/>
            <person name="Merchante C."/>
            <person name="Lan T."/>
            <person name="Xiong W."/>
            <person name="Mo B."/>
            <person name="Tang G."/>
            <person name="Chen X."/>
            <person name="Bailey-Serres J."/>
            <person name="Browning K.S."/>
            <person name="Brunkard J.O."/>
        </authorList>
    </citation>
    <scope>NOMENCLATURE</scope>
</reference>
<keyword id="KW-1185">Reference proteome</keyword>
<keyword id="KW-0687">Ribonucleoprotein</keyword>
<keyword id="KW-0689">Ribosomal protein</keyword>
<gene>
    <name type="primary">RPS25D</name>
    <name type="ordered locus">At4g34555</name>
    <name type="ORF">T4L20</name>
</gene>
<protein>
    <recommendedName>
        <fullName evidence="2">Small ribosomal subunit protein eS25x</fullName>
    </recommendedName>
    <alternativeName>
        <fullName>40S ribosomal protein S25-3</fullName>
    </alternativeName>
</protein>
<accession>Q8GYL5</accession>
<accession>Q8L955</accession>